<evidence type="ECO:0000255" key="1">
    <source>
        <dbReference type="PROSITE-ProRule" id="PRU00024"/>
    </source>
</evidence>
<evidence type="ECO:0000255" key="2">
    <source>
        <dbReference type="PROSITE-ProRule" id="PRU00357"/>
    </source>
</evidence>
<evidence type="ECO:0000256" key="3">
    <source>
        <dbReference type="SAM" id="MobiDB-lite"/>
    </source>
</evidence>
<evidence type="ECO:0000305" key="4"/>
<feature type="chain" id="PRO_0000113283" description="Zinc finger protein CONSTANS-LIKE 6">
    <location>
        <begin position="1"/>
        <end position="406"/>
    </location>
</feature>
<feature type="domain" description="CCT" evidence="2">
    <location>
        <begin position="357"/>
        <end position="399"/>
    </location>
</feature>
<feature type="zinc finger region" description="B box-type; atypical" evidence="1">
    <location>
        <begin position="17"/>
        <end position="59"/>
    </location>
</feature>
<feature type="region of interest" description="Disordered" evidence="3">
    <location>
        <begin position="63"/>
        <end position="95"/>
    </location>
</feature>
<feature type="compositionally biased region" description="Basic residues" evidence="3">
    <location>
        <begin position="82"/>
        <end position="95"/>
    </location>
</feature>
<feature type="binding site" evidence="1">
    <location>
        <position position="17"/>
    </location>
    <ligand>
        <name>Zn(2+)</name>
        <dbReference type="ChEBI" id="CHEBI:29105"/>
    </ligand>
</feature>
<feature type="binding site" evidence="1">
    <location>
        <position position="20"/>
    </location>
    <ligand>
        <name>Zn(2+)</name>
        <dbReference type="ChEBI" id="CHEBI:29105"/>
    </ligand>
</feature>
<feature type="binding site" evidence="1">
    <location>
        <position position="40"/>
    </location>
    <ligand>
        <name>Zn(2+)</name>
        <dbReference type="ChEBI" id="CHEBI:29105"/>
    </ligand>
</feature>
<feature type="binding site" evidence="1">
    <location>
        <position position="45"/>
    </location>
    <ligand>
        <name>Zn(2+)</name>
        <dbReference type="ChEBI" id="CHEBI:29105"/>
    </ligand>
</feature>
<feature type="sequence conflict" description="In Ref. 4; AAM61001." evidence="4" ref="4">
    <original>E</original>
    <variation>D</variation>
    <location>
        <position position="387"/>
    </location>
</feature>
<name>COL6_ARATH</name>
<sequence>MMKSLASAVGGKTARACDSCVKRRARWYCAADDAFLCHACDGSVHSANPLARRHERVRLKSASAGKYRHASPPHQATWHQGFTRKARTPRGGKKSHTMVFHDLVPEMSTEDQAESYEVEEQLIFEVPVMNSMVEEQCFNQSLEKQNEFPMMPLSFKSSDEEDDDNAESCLNGLFPTDMELAQFTADVETLLGGGDREFHSIEELGLGEMLKIEKEEVEEEGVVTREVHDQDEGDETSPFEISFDYEYTHKTTFDEGEEDEKEDVMKNVMEMGVNEMSGGIKEEKKEKALMLRLDYESVISTWGGQGIPWTARVPSEIDLDMVCFPTHTMGESGAEAHHHNHFRGLGLHLGDAGDGGREARVSRYREKRRTRLFSKKIRYEVRKLNAEKRPRMKGRFVKRSSIGVAH</sequence>
<comment type="subcellular location">
    <subcellularLocation>
        <location evidence="2">Nucleus</location>
    </subcellularLocation>
</comment>
<comment type="similarity">
    <text evidence="4">Belongs to the CONSTANS family.</text>
</comment>
<comment type="sequence caution" evidence="4">
    <conflict type="erroneous initiation">
        <sequence resource="EMBL-CDS" id="AAG52391"/>
    </conflict>
</comment>
<comment type="sequence caution" evidence="4">
    <conflict type="erroneous initiation">
        <sequence resource="EMBL-CDS" id="AAM61001"/>
    </conflict>
</comment>
<dbReference type="EMBL" id="AC011915">
    <property type="protein sequence ID" value="AAG52391.1"/>
    <property type="status" value="ALT_INIT"/>
    <property type="molecule type" value="Genomic_DNA"/>
</dbReference>
<dbReference type="EMBL" id="CP002684">
    <property type="protein sequence ID" value="AEE34802.1"/>
    <property type="molecule type" value="Genomic_DNA"/>
</dbReference>
<dbReference type="EMBL" id="AY054625">
    <property type="protein sequence ID" value="AAK96816.1"/>
    <property type="molecule type" value="mRNA"/>
</dbReference>
<dbReference type="EMBL" id="AY081541">
    <property type="protein sequence ID" value="AAM10103.1"/>
    <property type="molecule type" value="mRNA"/>
</dbReference>
<dbReference type="EMBL" id="AY084427">
    <property type="protein sequence ID" value="AAM61001.1"/>
    <property type="status" value="ALT_INIT"/>
    <property type="molecule type" value="mRNA"/>
</dbReference>
<dbReference type="PIR" id="D96709">
    <property type="entry name" value="D96709"/>
</dbReference>
<dbReference type="SMR" id="Q8LG76"/>
<dbReference type="BioGRID" id="28402">
    <property type="interactions" value="5"/>
</dbReference>
<dbReference type="FunCoup" id="Q8LG76">
    <property type="interactions" value="609"/>
</dbReference>
<dbReference type="IntAct" id="Q8LG76">
    <property type="interactions" value="3"/>
</dbReference>
<dbReference type="STRING" id="3702.Q8LG76"/>
<dbReference type="iPTMnet" id="Q8LG76"/>
<dbReference type="PaxDb" id="3702-AT1G68520.1"/>
<dbReference type="EnsemblPlants" id="AT1G68520.1">
    <property type="protein sequence ID" value="AT1G68520.1"/>
    <property type="gene ID" value="AT1G68520"/>
</dbReference>
<dbReference type="GeneID" id="843181"/>
<dbReference type="Gramene" id="AT1G68520.1">
    <property type="protein sequence ID" value="AT1G68520.1"/>
    <property type="gene ID" value="AT1G68520"/>
</dbReference>
<dbReference type="KEGG" id="ath:AT1G68520"/>
<dbReference type="Araport" id="AT1G68520"/>
<dbReference type="TAIR" id="AT1G68520">
    <property type="gene designation" value="BBX14"/>
</dbReference>
<dbReference type="eggNOG" id="KOG1601">
    <property type="taxonomic scope" value="Eukaryota"/>
</dbReference>
<dbReference type="HOGENOM" id="CLU_035373_0_0_1"/>
<dbReference type="InParanoid" id="Q8LG76"/>
<dbReference type="OMA" id="MGIMNEN"/>
<dbReference type="PhylomeDB" id="Q8LG76"/>
<dbReference type="PRO" id="PR:Q8LG76"/>
<dbReference type="Proteomes" id="UP000006548">
    <property type="component" value="Chromosome 1"/>
</dbReference>
<dbReference type="ExpressionAtlas" id="Q8LG76">
    <property type="expression patterns" value="baseline and differential"/>
</dbReference>
<dbReference type="GO" id="GO:0005634">
    <property type="term" value="C:nucleus"/>
    <property type="evidence" value="ECO:0007669"/>
    <property type="project" value="UniProtKB-SubCell"/>
</dbReference>
<dbReference type="GO" id="GO:0003700">
    <property type="term" value="F:DNA-binding transcription factor activity"/>
    <property type="evidence" value="ECO:0000250"/>
    <property type="project" value="TAIR"/>
</dbReference>
<dbReference type="GO" id="GO:0000976">
    <property type="term" value="F:transcription cis-regulatory region binding"/>
    <property type="evidence" value="ECO:0000353"/>
    <property type="project" value="TAIR"/>
</dbReference>
<dbReference type="GO" id="GO:0008270">
    <property type="term" value="F:zinc ion binding"/>
    <property type="evidence" value="ECO:0007669"/>
    <property type="project" value="UniProtKB-KW"/>
</dbReference>
<dbReference type="GO" id="GO:0006355">
    <property type="term" value="P:regulation of DNA-templated transcription"/>
    <property type="evidence" value="ECO:0000304"/>
    <property type="project" value="TAIR"/>
</dbReference>
<dbReference type="CDD" id="cd19821">
    <property type="entry name" value="Bbox1_BBX-like"/>
    <property type="match status" value="1"/>
</dbReference>
<dbReference type="InterPro" id="IPR010402">
    <property type="entry name" value="CCT_domain"/>
</dbReference>
<dbReference type="InterPro" id="IPR049808">
    <property type="entry name" value="CONSTANS-like_Bbox1"/>
</dbReference>
<dbReference type="InterPro" id="IPR052453">
    <property type="entry name" value="CONSTANS-like_ZF"/>
</dbReference>
<dbReference type="InterPro" id="IPR000315">
    <property type="entry name" value="Znf_B-box"/>
</dbReference>
<dbReference type="PANTHER" id="PTHR31874">
    <property type="entry name" value="CCT MOTIF FAMILY PROTEIN, EXPRESSED"/>
    <property type="match status" value="1"/>
</dbReference>
<dbReference type="PANTHER" id="PTHR31874:SF1">
    <property type="entry name" value="ZINC FINGER PROTEIN CONSTANS-LIKE 6"/>
    <property type="match status" value="1"/>
</dbReference>
<dbReference type="Pfam" id="PF06203">
    <property type="entry name" value="CCT"/>
    <property type="match status" value="1"/>
</dbReference>
<dbReference type="Pfam" id="PF00643">
    <property type="entry name" value="zf-B_box"/>
    <property type="match status" value="1"/>
</dbReference>
<dbReference type="SMART" id="SM00336">
    <property type="entry name" value="BBOX"/>
    <property type="match status" value="1"/>
</dbReference>
<dbReference type="PROSITE" id="PS51017">
    <property type="entry name" value="CCT"/>
    <property type="match status" value="1"/>
</dbReference>
<dbReference type="PROSITE" id="PS50119">
    <property type="entry name" value="ZF_BBOX"/>
    <property type="match status" value="1"/>
</dbReference>
<protein>
    <recommendedName>
        <fullName>Zinc finger protein CONSTANS-LIKE 6</fullName>
    </recommendedName>
</protein>
<organism>
    <name type="scientific">Arabidopsis thaliana</name>
    <name type="common">Mouse-ear cress</name>
    <dbReference type="NCBI Taxonomy" id="3702"/>
    <lineage>
        <taxon>Eukaryota</taxon>
        <taxon>Viridiplantae</taxon>
        <taxon>Streptophyta</taxon>
        <taxon>Embryophyta</taxon>
        <taxon>Tracheophyta</taxon>
        <taxon>Spermatophyta</taxon>
        <taxon>Magnoliopsida</taxon>
        <taxon>eudicotyledons</taxon>
        <taxon>Gunneridae</taxon>
        <taxon>Pentapetalae</taxon>
        <taxon>rosids</taxon>
        <taxon>malvids</taxon>
        <taxon>Brassicales</taxon>
        <taxon>Brassicaceae</taxon>
        <taxon>Camelineae</taxon>
        <taxon>Arabidopsis</taxon>
    </lineage>
</organism>
<keyword id="KW-0479">Metal-binding</keyword>
<keyword id="KW-0539">Nucleus</keyword>
<keyword id="KW-1185">Reference proteome</keyword>
<keyword id="KW-0862">Zinc</keyword>
<keyword id="KW-0863">Zinc-finger</keyword>
<accession>Q8LG76</accession>
<accession>Q93Y24</accession>
<accession>Q9CA29</accession>
<reference key="1">
    <citation type="journal article" date="2000" name="Nature">
        <title>Sequence and analysis of chromosome 1 of the plant Arabidopsis thaliana.</title>
        <authorList>
            <person name="Theologis A."/>
            <person name="Ecker J.R."/>
            <person name="Palm C.J."/>
            <person name="Federspiel N.A."/>
            <person name="Kaul S."/>
            <person name="White O."/>
            <person name="Alonso J."/>
            <person name="Altafi H."/>
            <person name="Araujo R."/>
            <person name="Bowman C.L."/>
            <person name="Brooks S.Y."/>
            <person name="Buehler E."/>
            <person name="Chan A."/>
            <person name="Chao Q."/>
            <person name="Chen H."/>
            <person name="Cheuk R.F."/>
            <person name="Chin C.W."/>
            <person name="Chung M.K."/>
            <person name="Conn L."/>
            <person name="Conway A.B."/>
            <person name="Conway A.R."/>
            <person name="Creasy T.H."/>
            <person name="Dewar K."/>
            <person name="Dunn P."/>
            <person name="Etgu P."/>
            <person name="Feldblyum T.V."/>
            <person name="Feng J.-D."/>
            <person name="Fong B."/>
            <person name="Fujii C.Y."/>
            <person name="Gill J.E."/>
            <person name="Goldsmith A.D."/>
            <person name="Haas B."/>
            <person name="Hansen N.F."/>
            <person name="Hughes B."/>
            <person name="Huizar L."/>
            <person name="Hunter J.L."/>
            <person name="Jenkins J."/>
            <person name="Johnson-Hopson C."/>
            <person name="Khan S."/>
            <person name="Khaykin E."/>
            <person name="Kim C.J."/>
            <person name="Koo H.L."/>
            <person name="Kremenetskaia I."/>
            <person name="Kurtz D.B."/>
            <person name="Kwan A."/>
            <person name="Lam B."/>
            <person name="Langin-Hooper S."/>
            <person name="Lee A."/>
            <person name="Lee J.M."/>
            <person name="Lenz C.A."/>
            <person name="Li J.H."/>
            <person name="Li Y.-P."/>
            <person name="Lin X."/>
            <person name="Liu S.X."/>
            <person name="Liu Z.A."/>
            <person name="Luros J.S."/>
            <person name="Maiti R."/>
            <person name="Marziali A."/>
            <person name="Militscher J."/>
            <person name="Miranda M."/>
            <person name="Nguyen M."/>
            <person name="Nierman W.C."/>
            <person name="Osborne B.I."/>
            <person name="Pai G."/>
            <person name="Peterson J."/>
            <person name="Pham P.K."/>
            <person name="Rizzo M."/>
            <person name="Rooney T."/>
            <person name="Rowley D."/>
            <person name="Sakano H."/>
            <person name="Salzberg S.L."/>
            <person name="Schwartz J.R."/>
            <person name="Shinn P."/>
            <person name="Southwick A.M."/>
            <person name="Sun H."/>
            <person name="Tallon L.J."/>
            <person name="Tambunga G."/>
            <person name="Toriumi M.J."/>
            <person name="Town C.D."/>
            <person name="Utterback T."/>
            <person name="Van Aken S."/>
            <person name="Vaysberg M."/>
            <person name="Vysotskaia V.S."/>
            <person name="Walker M."/>
            <person name="Wu D."/>
            <person name="Yu G."/>
            <person name="Fraser C.M."/>
            <person name="Venter J.C."/>
            <person name="Davis R.W."/>
        </authorList>
    </citation>
    <scope>NUCLEOTIDE SEQUENCE [LARGE SCALE GENOMIC DNA]</scope>
    <source>
        <strain>cv. Columbia</strain>
    </source>
</reference>
<reference key="2">
    <citation type="journal article" date="2017" name="Plant J.">
        <title>Araport11: a complete reannotation of the Arabidopsis thaliana reference genome.</title>
        <authorList>
            <person name="Cheng C.Y."/>
            <person name="Krishnakumar V."/>
            <person name="Chan A.P."/>
            <person name="Thibaud-Nissen F."/>
            <person name="Schobel S."/>
            <person name="Town C.D."/>
        </authorList>
    </citation>
    <scope>GENOME REANNOTATION</scope>
    <source>
        <strain>cv. Columbia</strain>
    </source>
</reference>
<reference key="3">
    <citation type="journal article" date="2003" name="Science">
        <title>Empirical analysis of transcriptional activity in the Arabidopsis genome.</title>
        <authorList>
            <person name="Yamada K."/>
            <person name="Lim J."/>
            <person name="Dale J.M."/>
            <person name="Chen H."/>
            <person name="Shinn P."/>
            <person name="Palm C.J."/>
            <person name="Southwick A.M."/>
            <person name="Wu H.C."/>
            <person name="Kim C.J."/>
            <person name="Nguyen M."/>
            <person name="Pham P.K."/>
            <person name="Cheuk R.F."/>
            <person name="Karlin-Newmann G."/>
            <person name="Liu S.X."/>
            <person name="Lam B."/>
            <person name="Sakano H."/>
            <person name="Wu T."/>
            <person name="Yu G."/>
            <person name="Miranda M."/>
            <person name="Quach H.L."/>
            <person name="Tripp M."/>
            <person name="Chang C.H."/>
            <person name="Lee J.M."/>
            <person name="Toriumi M.J."/>
            <person name="Chan M.M."/>
            <person name="Tang C.C."/>
            <person name="Onodera C.S."/>
            <person name="Deng J.M."/>
            <person name="Akiyama K."/>
            <person name="Ansari Y."/>
            <person name="Arakawa T."/>
            <person name="Banh J."/>
            <person name="Banno F."/>
            <person name="Bowser L."/>
            <person name="Brooks S.Y."/>
            <person name="Carninci P."/>
            <person name="Chao Q."/>
            <person name="Choy N."/>
            <person name="Enju A."/>
            <person name="Goldsmith A.D."/>
            <person name="Gurjal M."/>
            <person name="Hansen N.F."/>
            <person name="Hayashizaki Y."/>
            <person name="Johnson-Hopson C."/>
            <person name="Hsuan V.W."/>
            <person name="Iida K."/>
            <person name="Karnes M."/>
            <person name="Khan S."/>
            <person name="Koesema E."/>
            <person name="Ishida J."/>
            <person name="Jiang P.X."/>
            <person name="Jones T."/>
            <person name="Kawai J."/>
            <person name="Kamiya A."/>
            <person name="Meyers C."/>
            <person name="Nakajima M."/>
            <person name="Narusaka M."/>
            <person name="Seki M."/>
            <person name="Sakurai T."/>
            <person name="Satou M."/>
            <person name="Tamse R."/>
            <person name="Vaysberg M."/>
            <person name="Wallender E.K."/>
            <person name="Wong C."/>
            <person name="Yamamura Y."/>
            <person name="Yuan S."/>
            <person name="Shinozaki K."/>
            <person name="Davis R.W."/>
            <person name="Theologis A."/>
            <person name="Ecker J.R."/>
        </authorList>
    </citation>
    <scope>NUCLEOTIDE SEQUENCE [LARGE SCALE MRNA]</scope>
    <source>
        <strain>cv. Columbia</strain>
    </source>
</reference>
<reference key="4">
    <citation type="submission" date="2002-03" db="EMBL/GenBank/DDBJ databases">
        <title>Full-length cDNA from Arabidopsis thaliana.</title>
        <authorList>
            <person name="Brover V.V."/>
            <person name="Troukhan M.E."/>
            <person name="Alexandrov N.A."/>
            <person name="Lu Y.-P."/>
            <person name="Flavell R.B."/>
            <person name="Feldmann K.A."/>
        </authorList>
    </citation>
    <scope>NUCLEOTIDE SEQUENCE [LARGE SCALE MRNA]</scope>
</reference>
<reference key="5">
    <citation type="journal article" date="2003" name="Plant Physiol.">
        <title>The evolution of CONSTANS-like gene families in barley, rice, and Arabidopsis.</title>
        <authorList>
            <person name="Griffiths S."/>
            <person name="Dunford R.P."/>
            <person name="Coupland G."/>
            <person name="Laurie D.A."/>
        </authorList>
    </citation>
    <scope>GENE FAMILY</scope>
    <scope>NOMENCLATURE</scope>
</reference>
<gene>
    <name type="primary">COL6</name>
    <name type="ordered locus">At1g68520</name>
    <name type="ORF">T26J14.9</name>
</gene>
<proteinExistence type="evidence at transcript level"/>